<keyword id="KW-0903">Direct protein sequencing</keyword>
<keyword id="KW-0273">Eye lens protein</keyword>
<organism>
    <name type="scientific">Enteroctopus dofleini</name>
    <name type="common">North Pacific giant octopus</name>
    <name type="synonym">Octopus dofleini</name>
    <dbReference type="NCBI Taxonomy" id="267067"/>
    <lineage>
        <taxon>Eukaryota</taxon>
        <taxon>Metazoa</taxon>
        <taxon>Spiralia</taxon>
        <taxon>Lophotrochozoa</taxon>
        <taxon>Mollusca</taxon>
        <taxon>Cephalopoda</taxon>
        <taxon>Coleoidea</taxon>
        <taxon>Octopodiformes</taxon>
        <taxon>Octopoda</taxon>
        <taxon>Incirrata</taxon>
        <taxon>Octopodidae</taxon>
        <taxon>Enteroctopus</taxon>
    </lineage>
</organism>
<evidence type="ECO:0000305" key="1"/>
<dbReference type="EMBL" id="L06902">
    <property type="protein sequence ID" value="AAA29392.1"/>
    <property type="molecule type" value="Genomic_DNA"/>
</dbReference>
<dbReference type="PIR" id="A46725">
    <property type="entry name" value="A46725"/>
</dbReference>
<dbReference type="SMR" id="P30841"/>
<dbReference type="GO" id="GO:0016620">
    <property type="term" value="F:oxidoreductase activity, acting on the aldehyde or oxo group of donors, NAD or NADP as acceptor"/>
    <property type="evidence" value="ECO:0007669"/>
    <property type="project" value="InterPro"/>
</dbReference>
<dbReference type="GO" id="GO:0005212">
    <property type="term" value="F:structural constituent of eye lens"/>
    <property type="evidence" value="ECO:0007669"/>
    <property type="project" value="UniProtKB-KW"/>
</dbReference>
<dbReference type="CDD" id="cd07141">
    <property type="entry name" value="ALDH_F1AB_F2_RALDH1"/>
    <property type="match status" value="1"/>
</dbReference>
<dbReference type="FunFam" id="3.40.605.10:FF:000050">
    <property type="entry name" value="Aldehyde dehydrogenase, mitochondrial"/>
    <property type="match status" value="1"/>
</dbReference>
<dbReference type="FunFam" id="3.40.605.10:FF:000026">
    <property type="entry name" value="Aldehyde dehydrogenase, putative"/>
    <property type="match status" value="1"/>
</dbReference>
<dbReference type="FunFam" id="3.40.309.10:FF:000001">
    <property type="entry name" value="Mitochondrial aldehyde dehydrogenase 2"/>
    <property type="match status" value="1"/>
</dbReference>
<dbReference type="Gene3D" id="3.40.605.10">
    <property type="entry name" value="Aldehyde Dehydrogenase, Chain A, domain 1"/>
    <property type="match status" value="1"/>
</dbReference>
<dbReference type="Gene3D" id="3.40.309.10">
    <property type="entry name" value="Aldehyde Dehydrogenase, Chain A, domain 2"/>
    <property type="match status" value="1"/>
</dbReference>
<dbReference type="InterPro" id="IPR016161">
    <property type="entry name" value="Ald_DH/histidinol_DH"/>
</dbReference>
<dbReference type="InterPro" id="IPR016163">
    <property type="entry name" value="Ald_DH_C"/>
</dbReference>
<dbReference type="InterPro" id="IPR016162">
    <property type="entry name" value="Ald_DH_N"/>
</dbReference>
<dbReference type="InterPro" id="IPR015590">
    <property type="entry name" value="Aldehyde_DH_dom"/>
</dbReference>
<dbReference type="PANTHER" id="PTHR11699">
    <property type="entry name" value="ALDEHYDE DEHYDROGENASE-RELATED"/>
    <property type="match status" value="1"/>
</dbReference>
<dbReference type="Pfam" id="PF00171">
    <property type="entry name" value="Aldedh"/>
    <property type="match status" value="1"/>
</dbReference>
<dbReference type="SUPFAM" id="SSF53720">
    <property type="entry name" value="ALDH-like"/>
    <property type="match status" value="1"/>
</dbReference>
<accession>P30841</accession>
<protein>
    <recommendedName>
        <fullName>Omega-crystallin</fullName>
    </recommendedName>
</protein>
<comment type="function">
    <text>Omega-crystallins are structural components of squids and octopi eye lens. Contains relatively little if any DHAL activity.</text>
</comment>
<comment type="tissue specificity">
    <text>Lens.</text>
</comment>
<comment type="similarity">
    <text evidence="1">Belongs to the aldehyde dehydrogenase family.</text>
</comment>
<proteinExistence type="evidence at protein level"/>
<name>CROM_ENTDO</name>
<feature type="initiator methionine" description="Removed">
    <location>
        <position position="1"/>
    </location>
</feature>
<feature type="chain" id="PRO_0000056601" description="Omega-crystallin">
    <location>
        <begin position="2"/>
        <end position="496"/>
    </location>
</feature>
<feature type="sequence variant">
    <original>A</original>
    <variation>I</variation>
    <location>
        <position position="303"/>
    </location>
</feature>
<feature type="sequence variant">
    <original>F</original>
    <variation>I</variation>
    <location>
        <position position="382"/>
    </location>
</feature>
<sequence length="496" mass="55493">MAGLPPPNKTPEIKFTKIFINNQFVDSVNGKAYSVINPCTTKKICDVQEGSKADIDKAVQACKLAFKRGTPWRRMDASRRGHLLYRLADLFERDIAYLSSLETLNTGKPYKSAYQDIVHCIQVLRYYAGWADKNMGQNIPVDGDFFSFTKHEPVGICGLIIPWNYPMLMMTWKMAPALSCGNCIVVKPAEQTPLTALYCASLMEEAGFPPGVVNVVPGYGTICGQSISSHLDINKVSFTGSTEVGKLVMQAAGSSNLKRCSLELSGKCPVVVFPDTDLDFAVQQAHEAAFQNMGQCRWSGSRAYVHESIYEEFVKRSVEQATRRKIGDPYELDTEHGPQIDEEQYTKVLDYIKSAQEQGAKLKYGGNKHGDKGGYYIEPTVFSEVSDNMKIAKEEIFGPVQLLMKFRDLDDVIDRCNNSDYGMAAAIFTNDINRIMTFTNAVNTGTIWVNTFHHWFPQAPFGGFKTSGISREMGKYALREYTEVKSVIYRIPQKDS</sequence>
<reference key="1">
    <citation type="journal article" date="1993" name="J. Biol. Chem.">
        <title>Aldehyde dehydrogenase-derived omega-crystallins of squid and octopus. Specialization for lens expression.</title>
        <authorList>
            <person name="Zinovieva R.D."/>
            <person name="Tomarev S.I."/>
            <person name="Piatigorsky J."/>
        </authorList>
    </citation>
    <scope>NUCLEOTIDE SEQUENCE [GENOMIC DNA]</scope>
</reference>
<reference key="2">
    <citation type="journal article" date="1991" name="J. Biol. Chem.">
        <title>Crystallins of the octopus lens. Recruitment from detoxification enzymes.</title>
        <authorList>
            <person name="Tomarev S.I."/>
            <person name="Zinovieva R.D."/>
            <person name="Piatigorsky J."/>
        </authorList>
    </citation>
    <scope>PARTIAL PROTEIN SEQUENCE</scope>
</reference>